<keyword id="KW-0997">Cell inner membrane</keyword>
<keyword id="KW-1003">Cell membrane</keyword>
<keyword id="KW-0460">Magnesium</keyword>
<keyword id="KW-0472">Membrane</keyword>
<keyword id="KW-1185">Reference proteome</keyword>
<keyword id="KW-0808">Transferase</keyword>
<keyword id="KW-0812">Transmembrane</keyword>
<keyword id="KW-1133">Transmembrane helix</keyword>
<keyword id="KW-0831">Ubiquinone biosynthesis</keyword>
<proteinExistence type="inferred from homology"/>
<sequence>MEWSLTQNKLLAYHRLMRTDKPIGALLLLWPTLWALWVASPGVPPLWILAVFVAGVWLMRAAGCVVNDYADRKFDGHVKRTAHRPLPSGDVTEKEARNLFVILVLLSFLLVLTLNVKTILLSVAALALAWMYPFMKRYTHLPQVVLGAAFGWSIPMAFCAVSESLPLSCWLMFFANICWAVAYDTEYAMVDRDDDVKIGVKSTAILFGRHDKLIIGLLQIAVLALLGTVGWLNGLGAFYYAGLAGAGALFIWQQKIIAGRDRDACFRAFLNNNYVGLLVFIGLALSYLKF</sequence>
<organism>
    <name type="scientific">Cronobacter sakazakii (strain ATCC BAA-894)</name>
    <name type="common">Enterobacter sakazakii</name>
    <dbReference type="NCBI Taxonomy" id="290339"/>
    <lineage>
        <taxon>Bacteria</taxon>
        <taxon>Pseudomonadati</taxon>
        <taxon>Pseudomonadota</taxon>
        <taxon>Gammaproteobacteria</taxon>
        <taxon>Enterobacterales</taxon>
        <taxon>Enterobacteriaceae</taxon>
        <taxon>Cronobacter</taxon>
    </lineage>
</organism>
<accession>A7MPP0</accession>
<protein>
    <recommendedName>
        <fullName evidence="1">4-hydroxybenzoate octaprenyltransferase</fullName>
        <ecNumber evidence="1">2.5.1.39</ecNumber>
    </recommendedName>
    <alternativeName>
        <fullName evidence="1">4-HB polyprenyltransferase</fullName>
    </alternativeName>
</protein>
<reference key="1">
    <citation type="journal article" date="2010" name="PLoS ONE">
        <title>Genome sequence of Cronobacter sakazakii BAA-894 and comparative genomic hybridization analysis with other Cronobacter species.</title>
        <authorList>
            <person name="Kucerova E."/>
            <person name="Clifton S.W."/>
            <person name="Xia X.Q."/>
            <person name="Long F."/>
            <person name="Porwollik S."/>
            <person name="Fulton L."/>
            <person name="Fronick C."/>
            <person name="Minx P."/>
            <person name="Kyung K."/>
            <person name="Warren W."/>
            <person name="Fulton R."/>
            <person name="Feng D."/>
            <person name="Wollam A."/>
            <person name="Shah N."/>
            <person name="Bhonagiri V."/>
            <person name="Nash W.E."/>
            <person name="Hallsworth-Pepin K."/>
            <person name="Wilson R.K."/>
            <person name="McClelland M."/>
            <person name="Forsythe S.J."/>
        </authorList>
    </citation>
    <scope>NUCLEOTIDE SEQUENCE [LARGE SCALE GENOMIC DNA]</scope>
    <source>
        <strain>ATCC BAA-894</strain>
    </source>
</reference>
<feature type="chain" id="PRO_1000069819" description="4-hydroxybenzoate octaprenyltransferase">
    <location>
        <begin position="1"/>
        <end position="290"/>
    </location>
</feature>
<feature type="transmembrane region" description="Helical" evidence="1">
    <location>
        <begin position="33"/>
        <end position="53"/>
    </location>
</feature>
<feature type="transmembrane region" description="Helical" evidence="1">
    <location>
        <begin position="99"/>
        <end position="119"/>
    </location>
</feature>
<feature type="transmembrane region" description="Helical" evidence="1">
    <location>
        <begin position="141"/>
        <end position="161"/>
    </location>
</feature>
<feature type="transmembrane region" description="Helical" evidence="1">
    <location>
        <begin position="213"/>
        <end position="233"/>
    </location>
</feature>
<feature type="transmembrane region" description="Helical" evidence="1">
    <location>
        <begin position="234"/>
        <end position="254"/>
    </location>
</feature>
<feature type="transmembrane region" description="Helical" evidence="1">
    <location>
        <begin position="268"/>
        <end position="288"/>
    </location>
</feature>
<gene>
    <name evidence="1" type="primary">ubiA</name>
    <name type="ordered locus">ESA_00086</name>
</gene>
<name>UBIA_CROS8</name>
<comment type="function">
    <text evidence="1">Catalyzes the prenylation of para-hydroxybenzoate (PHB) with an all-trans polyprenyl group. Mediates the second step in the final reaction sequence of ubiquinone-8 (UQ-8) biosynthesis, which is the condensation of the polyisoprenoid side chain with PHB, generating the first membrane-bound Q intermediate 3-octaprenyl-4-hydroxybenzoate.</text>
</comment>
<comment type="catalytic activity">
    <reaction evidence="1">
        <text>all-trans-octaprenyl diphosphate + 4-hydroxybenzoate = 4-hydroxy-3-(all-trans-octaprenyl)benzoate + diphosphate</text>
        <dbReference type="Rhea" id="RHEA:27782"/>
        <dbReference type="ChEBI" id="CHEBI:1617"/>
        <dbReference type="ChEBI" id="CHEBI:17879"/>
        <dbReference type="ChEBI" id="CHEBI:33019"/>
        <dbReference type="ChEBI" id="CHEBI:57711"/>
        <dbReference type="EC" id="2.5.1.39"/>
    </reaction>
</comment>
<comment type="cofactor">
    <cofactor evidence="1">
        <name>Mg(2+)</name>
        <dbReference type="ChEBI" id="CHEBI:18420"/>
    </cofactor>
</comment>
<comment type="pathway">
    <text evidence="1">Cofactor biosynthesis; ubiquinone biosynthesis.</text>
</comment>
<comment type="subcellular location">
    <subcellularLocation>
        <location evidence="1">Cell inner membrane</location>
        <topology evidence="1">Multi-pass membrane protein</topology>
    </subcellularLocation>
</comment>
<comment type="similarity">
    <text evidence="1">Belongs to the UbiA prenyltransferase family.</text>
</comment>
<dbReference type="EC" id="2.5.1.39" evidence="1"/>
<dbReference type="EMBL" id="CP000783">
    <property type="protein sequence ID" value="ABU75391.1"/>
    <property type="molecule type" value="Genomic_DNA"/>
</dbReference>
<dbReference type="RefSeq" id="WP_007778572.1">
    <property type="nucleotide sequence ID" value="NC_009778.1"/>
</dbReference>
<dbReference type="SMR" id="A7MPP0"/>
<dbReference type="GeneID" id="45713974"/>
<dbReference type="KEGG" id="esa:ESA_00086"/>
<dbReference type="HOGENOM" id="CLU_034879_1_0_6"/>
<dbReference type="UniPathway" id="UPA00232"/>
<dbReference type="Proteomes" id="UP000000260">
    <property type="component" value="Chromosome"/>
</dbReference>
<dbReference type="GO" id="GO:0005886">
    <property type="term" value="C:plasma membrane"/>
    <property type="evidence" value="ECO:0007669"/>
    <property type="project" value="UniProtKB-SubCell"/>
</dbReference>
<dbReference type="GO" id="GO:0008412">
    <property type="term" value="F:4-hydroxybenzoate polyprenyltransferase activity"/>
    <property type="evidence" value="ECO:0007669"/>
    <property type="project" value="UniProtKB-UniRule"/>
</dbReference>
<dbReference type="GO" id="GO:0006744">
    <property type="term" value="P:ubiquinone biosynthetic process"/>
    <property type="evidence" value="ECO:0007669"/>
    <property type="project" value="UniProtKB-UniRule"/>
</dbReference>
<dbReference type="CDD" id="cd13959">
    <property type="entry name" value="PT_UbiA_COQ2"/>
    <property type="match status" value="1"/>
</dbReference>
<dbReference type="FunFam" id="1.10.357.140:FF:000002">
    <property type="entry name" value="4-hydroxybenzoate octaprenyltransferase"/>
    <property type="match status" value="1"/>
</dbReference>
<dbReference type="FunFam" id="1.20.120.1780:FF:000001">
    <property type="entry name" value="4-hydroxybenzoate octaprenyltransferase"/>
    <property type="match status" value="1"/>
</dbReference>
<dbReference type="Gene3D" id="1.10.357.140">
    <property type="entry name" value="UbiA prenyltransferase"/>
    <property type="match status" value="1"/>
</dbReference>
<dbReference type="Gene3D" id="1.20.120.1780">
    <property type="entry name" value="UbiA prenyltransferase"/>
    <property type="match status" value="1"/>
</dbReference>
<dbReference type="HAMAP" id="MF_01635">
    <property type="entry name" value="UbiA"/>
    <property type="match status" value="1"/>
</dbReference>
<dbReference type="InterPro" id="IPR006370">
    <property type="entry name" value="HB_polyprenyltransferase-like"/>
</dbReference>
<dbReference type="InterPro" id="IPR039653">
    <property type="entry name" value="Prenyltransferase"/>
</dbReference>
<dbReference type="InterPro" id="IPR000537">
    <property type="entry name" value="UbiA_prenyltransferase"/>
</dbReference>
<dbReference type="InterPro" id="IPR030470">
    <property type="entry name" value="UbiA_prenylTrfase_CS"/>
</dbReference>
<dbReference type="InterPro" id="IPR044878">
    <property type="entry name" value="UbiA_sf"/>
</dbReference>
<dbReference type="NCBIfam" id="TIGR01474">
    <property type="entry name" value="ubiA_proteo"/>
    <property type="match status" value="1"/>
</dbReference>
<dbReference type="PANTHER" id="PTHR11048:SF28">
    <property type="entry name" value="4-HYDROXYBENZOATE POLYPRENYLTRANSFERASE, MITOCHONDRIAL"/>
    <property type="match status" value="1"/>
</dbReference>
<dbReference type="PANTHER" id="PTHR11048">
    <property type="entry name" value="PRENYLTRANSFERASES"/>
    <property type="match status" value="1"/>
</dbReference>
<dbReference type="Pfam" id="PF01040">
    <property type="entry name" value="UbiA"/>
    <property type="match status" value="1"/>
</dbReference>
<dbReference type="PROSITE" id="PS00943">
    <property type="entry name" value="UBIA"/>
    <property type="match status" value="1"/>
</dbReference>
<evidence type="ECO:0000255" key="1">
    <source>
        <dbReference type="HAMAP-Rule" id="MF_01635"/>
    </source>
</evidence>